<protein>
    <recommendedName>
        <fullName evidence="1">Fatty acid oxidation complex subunit alpha</fullName>
    </recommendedName>
    <domain>
        <recommendedName>
            <fullName evidence="1">Enoyl-CoA hydratase/Delta(3)-cis-Delta(2)-trans-enoyl-CoA isomerase/3-hydroxybutyryl-CoA epimerase</fullName>
            <ecNumber evidence="1">4.2.1.17</ecNumber>
            <ecNumber evidence="1">5.1.2.3</ecNumber>
            <ecNumber evidence="1">5.3.3.8</ecNumber>
        </recommendedName>
    </domain>
    <domain>
        <recommendedName>
            <fullName evidence="1">3-hydroxyacyl-CoA dehydrogenase</fullName>
            <ecNumber evidence="1">1.1.1.35</ecNumber>
        </recommendedName>
    </domain>
</protein>
<comment type="function">
    <text evidence="1">Involved in the aerobic and anaerobic degradation of long-chain fatty acids via beta-oxidation cycle. Catalyzes the formation of 3-oxoacyl-CoA from enoyl-CoA via L-3-hydroxyacyl-CoA. It can also use D-3-hydroxyacyl-CoA and cis-3-enoyl-CoA as substrate.</text>
</comment>
<comment type="catalytic activity">
    <reaction evidence="1">
        <text>a (3S)-3-hydroxyacyl-CoA + NAD(+) = a 3-oxoacyl-CoA + NADH + H(+)</text>
        <dbReference type="Rhea" id="RHEA:22432"/>
        <dbReference type="ChEBI" id="CHEBI:15378"/>
        <dbReference type="ChEBI" id="CHEBI:57318"/>
        <dbReference type="ChEBI" id="CHEBI:57540"/>
        <dbReference type="ChEBI" id="CHEBI:57945"/>
        <dbReference type="ChEBI" id="CHEBI:90726"/>
        <dbReference type="EC" id="1.1.1.35"/>
    </reaction>
</comment>
<comment type="catalytic activity">
    <reaction evidence="1">
        <text>a (3S)-3-hydroxyacyl-CoA = a (2E)-enoyl-CoA + H2O</text>
        <dbReference type="Rhea" id="RHEA:16105"/>
        <dbReference type="ChEBI" id="CHEBI:15377"/>
        <dbReference type="ChEBI" id="CHEBI:57318"/>
        <dbReference type="ChEBI" id="CHEBI:58856"/>
        <dbReference type="EC" id="4.2.1.17"/>
    </reaction>
</comment>
<comment type="catalytic activity">
    <reaction evidence="1">
        <text>a 4-saturated-(3S)-3-hydroxyacyl-CoA = a (3E)-enoyl-CoA + H2O</text>
        <dbReference type="Rhea" id="RHEA:20724"/>
        <dbReference type="ChEBI" id="CHEBI:15377"/>
        <dbReference type="ChEBI" id="CHEBI:58521"/>
        <dbReference type="ChEBI" id="CHEBI:137480"/>
        <dbReference type="EC" id="4.2.1.17"/>
    </reaction>
</comment>
<comment type="catalytic activity">
    <reaction evidence="1">
        <text>(3S)-3-hydroxybutanoyl-CoA = (3R)-3-hydroxybutanoyl-CoA</text>
        <dbReference type="Rhea" id="RHEA:21760"/>
        <dbReference type="ChEBI" id="CHEBI:57315"/>
        <dbReference type="ChEBI" id="CHEBI:57316"/>
        <dbReference type="EC" id="5.1.2.3"/>
    </reaction>
</comment>
<comment type="catalytic activity">
    <reaction evidence="1">
        <text>a (3Z)-enoyl-CoA = a 4-saturated (2E)-enoyl-CoA</text>
        <dbReference type="Rhea" id="RHEA:45900"/>
        <dbReference type="ChEBI" id="CHEBI:85097"/>
        <dbReference type="ChEBI" id="CHEBI:85489"/>
        <dbReference type="EC" id="5.3.3.8"/>
    </reaction>
</comment>
<comment type="catalytic activity">
    <reaction evidence="1">
        <text>a (3E)-enoyl-CoA = a 4-saturated (2E)-enoyl-CoA</text>
        <dbReference type="Rhea" id="RHEA:45228"/>
        <dbReference type="ChEBI" id="CHEBI:58521"/>
        <dbReference type="ChEBI" id="CHEBI:85097"/>
        <dbReference type="EC" id="5.3.3.8"/>
    </reaction>
</comment>
<comment type="pathway">
    <text evidence="1">Lipid metabolism; fatty acid beta-oxidation.</text>
</comment>
<comment type="subunit">
    <text evidence="1">Heterotetramer of two alpha chains (FadB) and two beta chains (FadA).</text>
</comment>
<comment type="similarity">
    <text evidence="1">In the N-terminal section; belongs to the enoyl-CoA hydratase/isomerase family.</text>
</comment>
<comment type="similarity">
    <text evidence="1">In the C-terminal section; belongs to the 3-hydroxyacyl-CoA dehydrogenase family.</text>
</comment>
<evidence type="ECO:0000255" key="1">
    <source>
        <dbReference type="HAMAP-Rule" id="MF_01621"/>
    </source>
</evidence>
<dbReference type="EC" id="4.2.1.17" evidence="1"/>
<dbReference type="EC" id="5.1.2.3" evidence="1"/>
<dbReference type="EC" id="5.3.3.8" evidence="1"/>
<dbReference type="EC" id="1.1.1.35" evidence="1"/>
<dbReference type="EMBL" id="CP000026">
    <property type="protein sequence ID" value="AAV79598.1"/>
    <property type="molecule type" value="Genomic_DNA"/>
</dbReference>
<dbReference type="SMR" id="Q5PKQ2"/>
<dbReference type="KEGG" id="spt:SPA3823"/>
<dbReference type="HOGENOM" id="CLU_009834_16_3_6"/>
<dbReference type="UniPathway" id="UPA00659"/>
<dbReference type="Proteomes" id="UP000008185">
    <property type="component" value="Chromosome"/>
</dbReference>
<dbReference type="GO" id="GO:0036125">
    <property type="term" value="C:fatty acid beta-oxidation multienzyme complex"/>
    <property type="evidence" value="ECO:0007669"/>
    <property type="project" value="InterPro"/>
</dbReference>
<dbReference type="GO" id="GO:0008692">
    <property type="term" value="F:3-hydroxybutyryl-CoA epimerase activity"/>
    <property type="evidence" value="ECO:0007669"/>
    <property type="project" value="UniProtKB-UniRule"/>
</dbReference>
<dbReference type="GO" id="GO:0004165">
    <property type="term" value="F:delta(3)-delta(2)-enoyl-CoA isomerase activity"/>
    <property type="evidence" value="ECO:0007669"/>
    <property type="project" value="UniProtKB-UniRule"/>
</dbReference>
<dbReference type="GO" id="GO:0004300">
    <property type="term" value="F:enoyl-CoA hydratase activity"/>
    <property type="evidence" value="ECO:0007669"/>
    <property type="project" value="UniProtKB-UniRule"/>
</dbReference>
<dbReference type="GO" id="GO:0016509">
    <property type="term" value="F:long-chain-3-hydroxyacyl-CoA dehydrogenase activity"/>
    <property type="evidence" value="ECO:0007669"/>
    <property type="project" value="TreeGrafter"/>
</dbReference>
<dbReference type="GO" id="GO:0070403">
    <property type="term" value="F:NAD+ binding"/>
    <property type="evidence" value="ECO:0007669"/>
    <property type="project" value="InterPro"/>
</dbReference>
<dbReference type="GO" id="GO:0006635">
    <property type="term" value="P:fatty acid beta-oxidation"/>
    <property type="evidence" value="ECO:0007669"/>
    <property type="project" value="UniProtKB-UniRule"/>
</dbReference>
<dbReference type="CDD" id="cd06558">
    <property type="entry name" value="crotonase-like"/>
    <property type="match status" value="1"/>
</dbReference>
<dbReference type="FunFam" id="1.10.1040.50:FF:000001">
    <property type="entry name" value="Fatty acid oxidation complex subunit alpha"/>
    <property type="match status" value="1"/>
</dbReference>
<dbReference type="FunFam" id="3.90.226.10:FF:000018">
    <property type="entry name" value="Fatty acid oxidation complex subunit alpha"/>
    <property type="match status" value="1"/>
</dbReference>
<dbReference type="FunFam" id="3.40.50.720:FF:000009">
    <property type="entry name" value="Fatty oxidation complex, alpha subunit"/>
    <property type="match status" value="1"/>
</dbReference>
<dbReference type="Gene3D" id="1.10.1040.50">
    <property type="match status" value="1"/>
</dbReference>
<dbReference type="Gene3D" id="3.90.226.10">
    <property type="entry name" value="2-enoyl-CoA Hydratase, Chain A, domain 1"/>
    <property type="match status" value="1"/>
</dbReference>
<dbReference type="Gene3D" id="3.40.50.720">
    <property type="entry name" value="NAD(P)-binding Rossmann-like Domain"/>
    <property type="match status" value="1"/>
</dbReference>
<dbReference type="HAMAP" id="MF_01621">
    <property type="entry name" value="FadB"/>
    <property type="match status" value="1"/>
</dbReference>
<dbReference type="InterPro" id="IPR006180">
    <property type="entry name" value="3-OHacyl-CoA_DH_CS"/>
</dbReference>
<dbReference type="InterPro" id="IPR006176">
    <property type="entry name" value="3-OHacyl-CoA_DH_NAD-bd"/>
</dbReference>
<dbReference type="InterPro" id="IPR006108">
    <property type="entry name" value="3HC_DH_C"/>
</dbReference>
<dbReference type="InterPro" id="IPR008927">
    <property type="entry name" value="6-PGluconate_DH-like_C_sf"/>
</dbReference>
<dbReference type="InterPro" id="IPR029045">
    <property type="entry name" value="ClpP/crotonase-like_dom_sf"/>
</dbReference>
<dbReference type="InterPro" id="IPR018376">
    <property type="entry name" value="Enoyl-CoA_hyd/isom_CS"/>
</dbReference>
<dbReference type="InterPro" id="IPR001753">
    <property type="entry name" value="Enoyl-CoA_hydra/iso"/>
</dbReference>
<dbReference type="InterPro" id="IPR050136">
    <property type="entry name" value="FA_oxidation_alpha_subunit"/>
</dbReference>
<dbReference type="InterPro" id="IPR012799">
    <property type="entry name" value="FadB"/>
</dbReference>
<dbReference type="InterPro" id="IPR036291">
    <property type="entry name" value="NAD(P)-bd_dom_sf"/>
</dbReference>
<dbReference type="NCBIfam" id="TIGR02437">
    <property type="entry name" value="FadB"/>
    <property type="match status" value="1"/>
</dbReference>
<dbReference type="NCBIfam" id="NF008727">
    <property type="entry name" value="PRK11730.1"/>
    <property type="match status" value="1"/>
</dbReference>
<dbReference type="PANTHER" id="PTHR43612">
    <property type="entry name" value="TRIFUNCTIONAL ENZYME SUBUNIT ALPHA"/>
    <property type="match status" value="1"/>
</dbReference>
<dbReference type="PANTHER" id="PTHR43612:SF3">
    <property type="entry name" value="TRIFUNCTIONAL ENZYME SUBUNIT ALPHA, MITOCHONDRIAL"/>
    <property type="match status" value="1"/>
</dbReference>
<dbReference type="Pfam" id="PF00725">
    <property type="entry name" value="3HCDH"/>
    <property type="match status" value="2"/>
</dbReference>
<dbReference type="Pfam" id="PF02737">
    <property type="entry name" value="3HCDH_N"/>
    <property type="match status" value="1"/>
</dbReference>
<dbReference type="Pfam" id="PF00378">
    <property type="entry name" value="ECH_1"/>
    <property type="match status" value="1"/>
</dbReference>
<dbReference type="SUPFAM" id="SSF48179">
    <property type="entry name" value="6-phosphogluconate dehydrogenase C-terminal domain-like"/>
    <property type="match status" value="2"/>
</dbReference>
<dbReference type="SUPFAM" id="SSF52096">
    <property type="entry name" value="ClpP/crotonase"/>
    <property type="match status" value="1"/>
</dbReference>
<dbReference type="SUPFAM" id="SSF51735">
    <property type="entry name" value="NAD(P)-binding Rossmann-fold domains"/>
    <property type="match status" value="1"/>
</dbReference>
<dbReference type="PROSITE" id="PS00067">
    <property type="entry name" value="3HCDH"/>
    <property type="match status" value="1"/>
</dbReference>
<dbReference type="PROSITE" id="PS00166">
    <property type="entry name" value="ENOYL_COA_HYDRATASE"/>
    <property type="match status" value="1"/>
</dbReference>
<name>FADB_SALPA</name>
<feature type="chain" id="PRO_0000109285" description="Fatty acid oxidation complex subunit alpha">
    <location>
        <begin position="1"/>
        <end position="725"/>
    </location>
</feature>
<feature type="region of interest" description="Enoyl-CoA hydratase/isomerase" evidence="1">
    <location>
        <begin position="1"/>
        <end position="189"/>
    </location>
</feature>
<feature type="region of interest" description="3-hydroxyacyl-CoA dehydrogenase" evidence="1">
    <location>
        <begin position="311"/>
        <end position="725"/>
    </location>
</feature>
<feature type="active site" description="For 3-hydroxyacyl-CoA dehydrogenase activity" evidence="1">
    <location>
        <position position="450"/>
    </location>
</feature>
<feature type="binding site" evidence="1">
    <location>
        <position position="296"/>
    </location>
    <ligand>
        <name>substrate</name>
    </ligand>
</feature>
<feature type="binding site" evidence="1">
    <location>
        <position position="324"/>
    </location>
    <ligand>
        <name>NAD(+)</name>
        <dbReference type="ChEBI" id="CHEBI:57540"/>
    </ligand>
</feature>
<feature type="binding site" evidence="1">
    <location>
        <position position="343"/>
    </location>
    <ligand>
        <name>NAD(+)</name>
        <dbReference type="ChEBI" id="CHEBI:57540"/>
    </ligand>
</feature>
<feature type="binding site" evidence="1">
    <location>
        <begin position="400"/>
        <end position="402"/>
    </location>
    <ligand>
        <name>NAD(+)</name>
        <dbReference type="ChEBI" id="CHEBI:57540"/>
    </ligand>
</feature>
<feature type="binding site" evidence="1">
    <location>
        <position position="407"/>
    </location>
    <ligand>
        <name>NAD(+)</name>
        <dbReference type="ChEBI" id="CHEBI:57540"/>
    </ligand>
</feature>
<feature type="binding site" evidence="1">
    <location>
        <position position="429"/>
    </location>
    <ligand>
        <name>NAD(+)</name>
        <dbReference type="ChEBI" id="CHEBI:57540"/>
    </ligand>
</feature>
<feature type="binding site" evidence="1">
    <location>
        <position position="453"/>
    </location>
    <ligand>
        <name>NAD(+)</name>
        <dbReference type="ChEBI" id="CHEBI:57540"/>
    </ligand>
</feature>
<feature type="binding site" evidence="1">
    <location>
        <position position="500"/>
    </location>
    <ligand>
        <name>substrate</name>
    </ligand>
</feature>
<feature type="binding site" evidence="1">
    <location>
        <position position="660"/>
    </location>
    <ligand>
        <name>substrate</name>
    </ligand>
</feature>
<feature type="site" description="Important for catalytic activity" evidence="1">
    <location>
        <position position="119"/>
    </location>
</feature>
<feature type="site" description="Important for catalytic activity" evidence="1">
    <location>
        <position position="139"/>
    </location>
</feature>
<organism>
    <name type="scientific">Salmonella paratyphi A (strain ATCC 9150 / SARB42)</name>
    <dbReference type="NCBI Taxonomy" id="295319"/>
    <lineage>
        <taxon>Bacteria</taxon>
        <taxon>Pseudomonadati</taxon>
        <taxon>Pseudomonadota</taxon>
        <taxon>Gammaproteobacteria</taxon>
        <taxon>Enterobacterales</taxon>
        <taxon>Enterobacteriaceae</taxon>
        <taxon>Salmonella</taxon>
    </lineage>
</organism>
<proteinExistence type="inferred from homology"/>
<accession>Q5PKQ2</accession>
<gene>
    <name evidence="1" type="primary">fadB</name>
    <name type="ordered locus">SPA3823</name>
</gene>
<keyword id="KW-0276">Fatty acid metabolism</keyword>
<keyword id="KW-0413">Isomerase</keyword>
<keyword id="KW-0442">Lipid degradation</keyword>
<keyword id="KW-0443">Lipid metabolism</keyword>
<keyword id="KW-0456">Lyase</keyword>
<keyword id="KW-0511">Multifunctional enzyme</keyword>
<keyword id="KW-0520">NAD</keyword>
<keyword id="KW-0560">Oxidoreductase</keyword>
<sequence length="725" mass="79335">MLYKGDTLYLDWLEDGIAELVFDAPGSVNKLDTATVASLGQALEVLEKQHDLKGLLLRSNKAAFIVGADITEFLSLFLVPEEQLSQWLHFANSVFNRLEDLPVPTLAAVNGYALGGGCECVLATDYRLATPDLRIGLPETKLGIMPGFGGSVRLPRMLGADSALEIIAAGKDVGAEHALKIGLVDGVVKQEKLIEGAIAVLRQAITGDLDWRAKRQPKLEPLKLSKIEAAMSFTIAKGMVAQTAGKHYPAPMTAVKTIEAAARFGREEALNLENKSFVPLAHTNEARALVGIFLNDQYVKGKAKKLTKDIETPKQAAVLGAGIMGGGIAYQSAWKGVPVIMKDINDKSLNLGMTEAAKLLNKQLERGKIDGLKLAGVISTIHPTLDYAGFDRVDVVVEAVVENPKVKKAVLAETEQKVRPETVLASNTSTIPIGELASALERPENFCGMHFFNPVHRMPLVEIIRGEKSSDETIAKVIAWASKMGKTPIVVNDCPGFFVNRVLFPYFAGFSQLLRDGADFRKVDKVMEKQFGWPMGPAYLLDVVGIDTAHHAQAVMAAGFPQRMQKEYRDAIDALFDANRFGQKNGLGFWRYKEDSKGKPKKEEDAAVDDLLASVSQPKRDFSDDEIIARMMIPMINEVVRCLEEGIIASPAEADMALVYGLGFPPFHGGAFRWLDTQGSAKYLDMAQQYQHLGPLYEVPEGLRNKARHNEPIIPRLNQPVRLVL</sequence>
<reference key="1">
    <citation type="journal article" date="2004" name="Nat. Genet.">
        <title>Comparison of genome degradation in Paratyphi A and Typhi, human-restricted serovars of Salmonella enterica that cause typhoid.</title>
        <authorList>
            <person name="McClelland M."/>
            <person name="Sanderson K.E."/>
            <person name="Clifton S.W."/>
            <person name="Latreille P."/>
            <person name="Porwollik S."/>
            <person name="Sabo A."/>
            <person name="Meyer R."/>
            <person name="Bieri T."/>
            <person name="Ozersky P."/>
            <person name="McLellan M."/>
            <person name="Harkins C.R."/>
            <person name="Wang C."/>
            <person name="Nguyen C."/>
            <person name="Berghoff A."/>
            <person name="Elliott G."/>
            <person name="Kohlberg S."/>
            <person name="Strong C."/>
            <person name="Du F."/>
            <person name="Carter J."/>
            <person name="Kremizki C."/>
            <person name="Layman D."/>
            <person name="Leonard S."/>
            <person name="Sun H."/>
            <person name="Fulton L."/>
            <person name="Nash W."/>
            <person name="Miner T."/>
            <person name="Minx P."/>
            <person name="Delehaunty K."/>
            <person name="Fronick C."/>
            <person name="Magrini V."/>
            <person name="Nhan M."/>
            <person name="Warren W."/>
            <person name="Florea L."/>
            <person name="Spieth J."/>
            <person name="Wilson R.K."/>
        </authorList>
    </citation>
    <scope>NUCLEOTIDE SEQUENCE [LARGE SCALE GENOMIC DNA]</scope>
    <source>
        <strain>ATCC 9150 / SARB42</strain>
    </source>
</reference>